<keyword id="KW-1185">Reference proteome</keyword>
<keyword id="KW-0687">Ribonucleoprotein</keyword>
<keyword id="KW-0689">Ribosomal protein</keyword>
<keyword id="KW-0694">RNA-binding</keyword>
<keyword id="KW-0699">rRNA-binding</keyword>
<name>RS5_DESRM</name>
<reference key="1">
    <citation type="submission" date="2007-03" db="EMBL/GenBank/DDBJ databases">
        <title>Complete sequence of Desulfotomaculum reducens MI-1.</title>
        <authorList>
            <consortium name="US DOE Joint Genome Institute"/>
            <person name="Copeland A."/>
            <person name="Lucas S."/>
            <person name="Lapidus A."/>
            <person name="Barry K."/>
            <person name="Detter J.C."/>
            <person name="Glavina del Rio T."/>
            <person name="Hammon N."/>
            <person name="Israni S."/>
            <person name="Dalin E."/>
            <person name="Tice H."/>
            <person name="Pitluck S."/>
            <person name="Sims D."/>
            <person name="Brettin T."/>
            <person name="Bruce D."/>
            <person name="Han C."/>
            <person name="Tapia R."/>
            <person name="Schmutz J."/>
            <person name="Larimer F."/>
            <person name="Land M."/>
            <person name="Hauser L."/>
            <person name="Kyrpides N."/>
            <person name="Kim E."/>
            <person name="Tebo B.M."/>
            <person name="Richardson P."/>
        </authorList>
    </citation>
    <scope>NUCLEOTIDE SEQUENCE [LARGE SCALE GENOMIC DNA]</scope>
    <source>
        <strain>ATCC BAA-1160 / DSM 100696 / MI-1</strain>
    </source>
</reference>
<accession>A4J128</accession>
<comment type="function">
    <text evidence="1">With S4 and S12 plays an important role in translational accuracy.</text>
</comment>
<comment type="function">
    <text evidence="1">Located at the back of the 30S subunit body where it stabilizes the conformation of the head with respect to the body.</text>
</comment>
<comment type="subunit">
    <text evidence="1">Part of the 30S ribosomal subunit. Contacts proteins S4 and S8.</text>
</comment>
<comment type="domain">
    <text>The N-terminal domain interacts with the head of the 30S subunit; the C-terminal domain interacts with the body and contacts protein S4. The interaction surface between S4 and S5 is involved in control of translational fidelity.</text>
</comment>
<comment type="similarity">
    <text evidence="1">Belongs to the universal ribosomal protein uS5 family.</text>
</comment>
<proteinExistence type="inferred from homology"/>
<evidence type="ECO:0000255" key="1">
    <source>
        <dbReference type="HAMAP-Rule" id="MF_01307"/>
    </source>
</evidence>
<evidence type="ECO:0000305" key="2"/>
<organism>
    <name type="scientific">Desulforamulus reducens (strain ATCC BAA-1160 / DSM 100696 / MI-1)</name>
    <name type="common">Desulfotomaculum reducens</name>
    <dbReference type="NCBI Taxonomy" id="349161"/>
    <lineage>
        <taxon>Bacteria</taxon>
        <taxon>Bacillati</taxon>
        <taxon>Bacillota</taxon>
        <taxon>Clostridia</taxon>
        <taxon>Eubacteriales</taxon>
        <taxon>Peptococcaceae</taxon>
        <taxon>Desulforamulus</taxon>
    </lineage>
</organism>
<dbReference type="EMBL" id="CP000612">
    <property type="protein sequence ID" value="ABO48781.1"/>
    <property type="molecule type" value="Genomic_DNA"/>
</dbReference>
<dbReference type="RefSeq" id="WP_011876621.1">
    <property type="nucleotide sequence ID" value="NC_009253.1"/>
</dbReference>
<dbReference type="SMR" id="A4J128"/>
<dbReference type="STRING" id="349161.Dred_0232"/>
<dbReference type="KEGG" id="drm:Dred_0232"/>
<dbReference type="eggNOG" id="COG0098">
    <property type="taxonomic scope" value="Bacteria"/>
</dbReference>
<dbReference type="HOGENOM" id="CLU_065898_2_2_9"/>
<dbReference type="OrthoDB" id="9809045at2"/>
<dbReference type="Proteomes" id="UP000001556">
    <property type="component" value="Chromosome"/>
</dbReference>
<dbReference type="GO" id="GO:0015935">
    <property type="term" value="C:small ribosomal subunit"/>
    <property type="evidence" value="ECO:0007669"/>
    <property type="project" value="InterPro"/>
</dbReference>
<dbReference type="GO" id="GO:0019843">
    <property type="term" value="F:rRNA binding"/>
    <property type="evidence" value="ECO:0007669"/>
    <property type="project" value="UniProtKB-UniRule"/>
</dbReference>
<dbReference type="GO" id="GO:0003735">
    <property type="term" value="F:structural constituent of ribosome"/>
    <property type="evidence" value="ECO:0007669"/>
    <property type="project" value="InterPro"/>
</dbReference>
<dbReference type="GO" id="GO:0006412">
    <property type="term" value="P:translation"/>
    <property type="evidence" value="ECO:0007669"/>
    <property type="project" value="UniProtKB-UniRule"/>
</dbReference>
<dbReference type="FunFam" id="3.30.160.20:FF:000001">
    <property type="entry name" value="30S ribosomal protein S5"/>
    <property type="match status" value="1"/>
</dbReference>
<dbReference type="FunFam" id="3.30.230.10:FF:000002">
    <property type="entry name" value="30S ribosomal protein S5"/>
    <property type="match status" value="1"/>
</dbReference>
<dbReference type="Gene3D" id="3.30.160.20">
    <property type="match status" value="1"/>
</dbReference>
<dbReference type="Gene3D" id="3.30.230.10">
    <property type="match status" value="1"/>
</dbReference>
<dbReference type="HAMAP" id="MF_01307_B">
    <property type="entry name" value="Ribosomal_uS5_B"/>
    <property type="match status" value="1"/>
</dbReference>
<dbReference type="InterPro" id="IPR020568">
    <property type="entry name" value="Ribosomal_Su5_D2-typ_SF"/>
</dbReference>
<dbReference type="InterPro" id="IPR000851">
    <property type="entry name" value="Ribosomal_uS5"/>
</dbReference>
<dbReference type="InterPro" id="IPR005712">
    <property type="entry name" value="Ribosomal_uS5_bac-type"/>
</dbReference>
<dbReference type="InterPro" id="IPR005324">
    <property type="entry name" value="Ribosomal_uS5_C"/>
</dbReference>
<dbReference type="InterPro" id="IPR013810">
    <property type="entry name" value="Ribosomal_uS5_N"/>
</dbReference>
<dbReference type="InterPro" id="IPR018192">
    <property type="entry name" value="Ribosomal_uS5_N_CS"/>
</dbReference>
<dbReference type="InterPro" id="IPR014721">
    <property type="entry name" value="Ribsml_uS5_D2-typ_fold_subgr"/>
</dbReference>
<dbReference type="NCBIfam" id="TIGR01021">
    <property type="entry name" value="rpsE_bact"/>
    <property type="match status" value="1"/>
</dbReference>
<dbReference type="PANTHER" id="PTHR48277">
    <property type="entry name" value="MITOCHONDRIAL RIBOSOMAL PROTEIN S5"/>
    <property type="match status" value="1"/>
</dbReference>
<dbReference type="PANTHER" id="PTHR48277:SF1">
    <property type="entry name" value="MITOCHONDRIAL RIBOSOMAL PROTEIN S5"/>
    <property type="match status" value="1"/>
</dbReference>
<dbReference type="Pfam" id="PF00333">
    <property type="entry name" value="Ribosomal_S5"/>
    <property type="match status" value="1"/>
</dbReference>
<dbReference type="Pfam" id="PF03719">
    <property type="entry name" value="Ribosomal_S5_C"/>
    <property type="match status" value="1"/>
</dbReference>
<dbReference type="SUPFAM" id="SSF54768">
    <property type="entry name" value="dsRNA-binding domain-like"/>
    <property type="match status" value="1"/>
</dbReference>
<dbReference type="SUPFAM" id="SSF54211">
    <property type="entry name" value="Ribosomal protein S5 domain 2-like"/>
    <property type="match status" value="1"/>
</dbReference>
<dbReference type="PROSITE" id="PS00585">
    <property type="entry name" value="RIBOSOMAL_S5"/>
    <property type="match status" value="1"/>
</dbReference>
<dbReference type="PROSITE" id="PS50881">
    <property type="entry name" value="S5_DSRBD"/>
    <property type="match status" value="1"/>
</dbReference>
<feature type="chain" id="PRO_0000323118" description="Small ribosomal subunit protein uS5">
    <location>
        <begin position="1"/>
        <end position="166"/>
    </location>
</feature>
<feature type="domain" description="S5 DRBM" evidence="1">
    <location>
        <begin position="11"/>
        <end position="74"/>
    </location>
</feature>
<gene>
    <name evidence="1" type="primary">rpsE</name>
    <name type="ordered locus">Dred_0232</name>
</gene>
<protein>
    <recommendedName>
        <fullName evidence="1">Small ribosomal subunit protein uS5</fullName>
    </recommendedName>
    <alternativeName>
        <fullName evidence="2">30S ribosomal protein S5</fullName>
    </alternativeName>
</protein>
<sequence>MARIDASKLELTEKVVYINRVAKVVKGGRRFSFSALVVVGDGNGHVGAGLGKAAEVPEAIRKGIEDAKKNMIKVPLNGTTITHQIQGRFGAGKVLMKPAAKGTGVIAGGPVRAILELAGVRDILTKSLGTNNANNMVNATMEGLKQLKTPEEVARLRGKTVEELLG</sequence>